<name>LEUC_SHIBS</name>
<keyword id="KW-0004">4Fe-4S</keyword>
<keyword id="KW-0028">Amino-acid biosynthesis</keyword>
<keyword id="KW-0100">Branched-chain amino acid biosynthesis</keyword>
<keyword id="KW-0408">Iron</keyword>
<keyword id="KW-0411">Iron-sulfur</keyword>
<keyword id="KW-0432">Leucine biosynthesis</keyword>
<keyword id="KW-0456">Lyase</keyword>
<keyword id="KW-0479">Metal-binding</keyword>
<feature type="chain" id="PRO_0000076806" description="3-isopropylmalate dehydratase large subunit">
    <location>
        <begin position="1"/>
        <end position="466"/>
    </location>
</feature>
<feature type="binding site" evidence="1">
    <location>
        <position position="347"/>
    </location>
    <ligand>
        <name>[4Fe-4S] cluster</name>
        <dbReference type="ChEBI" id="CHEBI:49883"/>
    </ligand>
</feature>
<feature type="binding site" evidence="1">
    <location>
        <position position="407"/>
    </location>
    <ligand>
        <name>[4Fe-4S] cluster</name>
        <dbReference type="ChEBI" id="CHEBI:49883"/>
    </ligand>
</feature>
<feature type="binding site" evidence="1">
    <location>
        <position position="410"/>
    </location>
    <ligand>
        <name>[4Fe-4S] cluster</name>
        <dbReference type="ChEBI" id="CHEBI:49883"/>
    </ligand>
</feature>
<accession>Q326G3</accession>
<proteinExistence type="inferred from homology"/>
<protein>
    <recommendedName>
        <fullName evidence="1">3-isopropylmalate dehydratase large subunit</fullName>
        <ecNumber evidence="1">4.2.1.33</ecNumber>
    </recommendedName>
    <alternativeName>
        <fullName evidence="1">Alpha-IPM isomerase</fullName>
        <shortName evidence="1">IPMI</shortName>
    </alternativeName>
    <alternativeName>
        <fullName evidence="1">Isopropylmalate isomerase</fullName>
    </alternativeName>
</protein>
<comment type="function">
    <text evidence="1">Catalyzes the isomerization between 2-isopropylmalate and 3-isopropylmalate, via the formation of 2-isopropylmaleate.</text>
</comment>
<comment type="catalytic activity">
    <reaction evidence="1">
        <text>(2R,3S)-3-isopropylmalate = (2S)-2-isopropylmalate</text>
        <dbReference type="Rhea" id="RHEA:32287"/>
        <dbReference type="ChEBI" id="CHEBI:1178"/>
        <dbReference type="ChEBI" id="CHEBI:35121"/>
        <dbReference type="EC" id="4.2.1.33"/>
    </reaction>
</comment>
<comment type="cofactor">
    <cofactor evidence="1">
        <name>[4Fe-4S] cluster</name>
        <dbReference type="ChEBI" id="CHEBI:49883"/>
    </cofactor>
    <text evidence="1">Binds 1 [4Fe-4S] cluster per subunit.</text>
</comment>
<comment type="pathway">
    <text evidence="1">Amino-acid biosynthesis; L-leucine biosynthesis; L-leucine from 3-methyl-2-oxobutanoate: step 2/4.</text>
</comment>
<comment type="subunit">
    <text evidence="1">Heterodimer of LeuC and LeuD.</text>
</comment>
<comment type="similarity">
    <text evidence="1">Belongs to the aconitase/IPM isomerase family. LeuC type 1 subfamily.</text>
</comment>
<dbReference type="EC" id="4.2.1.33" evidence="1"/>
<dbReference type="EMBL" id="CP000036">
    <property type="protein sequence ID" value="ABB64795.1"/>
    <property type="molecule type" value="Genomic_DNA"/>
</dbReference>
<dbReference type="RefSeq" id="WP_001140654.1">
    <property type="nucleotide sequence ID" value="NC_007613.1"/>
</dbReference>
<dbReference type="SMR" id="Q326G3"/>
<dbReference type="KEGG" id="sbo:SBO_0059"/>
<dbReference type="HOGENOM" id="CLU_006714_3_4_6"/>
<dbReference type="UniPathway" id="UPA00048">
    <property type="reaction ID" value="UER00071"/>
</dbReference>
<dbReference type="Proteomes" id="UP000007067">
    <property type="component" value="Chromosome"/>
</dbReference>
<dbReference type="GO" id="GO:0003861">
    <property type="term" value="F:3-isopropylmalate dehydratase activity"/>
    <property type="evidence" value="ECO:0007669"/>
    <property type="project" value="UniProtKB-UniRule"/>
</dbReference>
<dbReference type="GO" id="GO:0051539">
    <property type="term" value="F:4 iron, 4 sulfur cluster binding"/>
    <property type="evidence" value="ECO:0007669"/>
    <property type="project" value="UniProtKB-KW"/>
</dbReference>
<dbReference type="GO" id="GO:0046872">
    <property type="term" value="F:metal ion binding"/>
    <property type="evidence" value="ECO:0007669"/>
    <property type="project" value="UniProtKB-KW"/>
</dbReference>
<dbReference type="GO" id="GO:0009098">
    <property type="term" value="P:L-leucine biosynthetic process"/>
    <property type="evidence" value="ECO:0007669"/>
    <property type="project" value="UniProtKB-UniRule"/>
</dbReference>
<dbReference type="CDD" id="cd01583">
    <property type="entry name" value="IPMI"/>
    <property type="match status" value="1"/>
</dbReference>
<dbReference type="FunFam" id="3.30.499.10:FF:000006">
    <property type="entry name" value="3-isopropylmalate dehydratase large subunit"/>
    <property type="match status" value="1"/>
</dbReference>
<dbReference type="FunFam" id="3.30.499.10:FF:000007">
    <property type="entry name" value="3-isopropylmalate dehydratase large subunit"/>
    <property type="match status" value="1"/>
</dbReference>
<dbReference type="Gene3D" id="3.30.499.10">
    <property type="entry name" value="Aconitase, domain 3"/>
    <property type="match status" value="2"/>
</dbReference>
<dbReference type="HAMAP" id="MF_01026">
    <property type="entry name" value="LeuC_type1"/>
    <property type="match status" value="1"/>
</dbReference>
<dbReference type="InterPro" id="IPR004430">
    <property type="entry name" value="3-IsopropMal_deHydase_lsu"/>
</dbReference>
<dbReference type="InterPro" id="IPR015931">
    <property type="entry name" value="Acnase/IPM_dHydase_lsu_aba_1/3"/>
</dbReference>
<dbReference type="InterPro" id="IPR001030">
    <property type="entry name" value="Acoase/IPM_deHydtase_lsu_aba"/>
</dbReference>
<dbReference type="InterPro" id="IPR018136">
    <property type="entry name" value="Aconitase_4Fe-4S_BS"/>
</dbReference>
<dbReference type="InterPro" id="IPR036008">
    <property type="entry name" value="Aconitase_4Fe-4S_dom"/>
</dbReference>
<dbReference type="InterPro" id="IPR050067">
    <property type="entry name" value="IPM_dehydratase_rel_enz"/>
</dbReference>
<dbReference type="InterPro" id="IPR033941">
    <property type="entry name" value="IPMI_cat"/>
</dbReference>
<dbReference type="NCBIfam" id="TIGR00170">
    <property type="entry name" value="leuC"/>
    <property type="match status" value="1"/>
</dbReference>
<dbReference type="NCBIfam" id="NF004016">
    <property type="entry name" value="PRK05478.1"/>
    <property type="match status" value="1"/>
</dbReference>
<dbReference type="NCBIfam" id="NF009116">
    <property type="entry name" value="PRK12466.1"/>
    <property type="match status" value="1"/>
</dbReference>
<dbReference type="PANTHER" id="PTHR43822:SF9">
    <property type="entry name" value="3-ISOPROPYLMALATE DEHYDRATASE"/>
    <property type="match status" value="1"/>
</dbReference>
<dbReference type="PANTHER" id="PTHR43822">
    <property type="entry name" value="HOMOACONITASE, MITOCHONDRIAL-RELATED"/>
    <property type="match status" value="1"/>
</dbReference>
<dbReference type="Pfam" id="PF00330">
    <property type="entry name" value="Aconitase"/>
    <property type="match status" value="1"/>
</dbReference>
<dbReference type="PRINTS" id="PR00415">
    <property type="entry name" value="ACONITASE"/>
</dbReference>
<dbReference type="SUPFAM" id="SSF53732">
    <property type="entry name" value="Aconitase iron-sulfur domain"/>
    <property type="match status" value="1"/>
</dbReference>
<dbReference type="PROSITE" id="PS00450">
    <property type="entry name" value="ACONITASE_1"/>
    <property type="match status" value="1"/>
</dbReference>
<dbReference type="PROSITE" id="PS01244">
    <property type="entry name" value="ACONITASE_2"/>
    <property type="match status" value="1"/>
</dbReference>
<gene>
    <name evidence="1" type="primary">leuC</name>
    <name type="ordered locus">SBO_0059</name>
</gene>
<reference key="1">
    <citation type="journal article" date="2005" name="Nucleic Acids Res.">
        <title>Genome dynamics and diversity of Shigella species, the etiologic agents of bacillary dysentery.</title>
        <authorList>
            <person name="Yang F."/>
            <person name="Yang J."/>
            <person name="Zhang X."/>
            <person name="Chen L."/>
            <person name="Jiang Y."/>
            <person name="Yan Y."/>
            <person name="Tang X."/>
            <person name="Wang J."/>
            <person name="Xiong Z."/>
            <person name="Dong J."/>
            <person name="Xue Y."/>
            <person name="Zhu Y."/>
            <person name="Xu X."/>
            <person name="Sun L."/>
            <person name="Chen S."/>
            <person name="Nie H."/>
            <person name="Peng J."/>
            <person name="Xu J."/>
            <person name="Wang Y."/>
            <person name="Yuan Z."/>
            <person name="Wen Y."/>
            <person name="Yao Z."/>
            <person name="Shen Y."/>
            <person name="Qiang B."/>
            <person name="Hou Y."/>
            <person name="Yu J."/>
            <person name="Jin Q."/>
        </authorList>
    </citation>
    <scope>NUCLEOTIDE SEQUENCE [LARGE SCALE GENOMIC DNA]</scope>
    <source>
        <strain>Sb227</strain>
    </source>
</reference>
<organism>
    <name type="scientific">Shigella boydii serotype 4 (strain Sb227)</name>
    <dbReference type="NCBI Taxonomy" id="300268"/>
    <lineage>
        <taxon>Bacteria</taxon>
        <taxon>Pseudomonadati</taxon>
        <taxon>Pseudomonadota</taxon>
        <taxon>Gammaproteobacteria</taxon>
        <taxon>Enterobacterales</taxon>
        <taxon>Enterobacteriaceae</taxon>
        <taxon>Shigella</taxon>
    </lineage>
</organism>
<evidence type="ECO:0000255" key="1">
    <source>
        <dbReference type="HAMAP-Rule" id="MF_01026"/>
    </source>
</evidence>
<sequence length="466" mass="49913">MAKTLYEKLFDAHVVYEAENETPLLYIDRHLVHEVTSPQAFDGLRAHGRPVRQPGKTFATMDHNVSTQTKDINACGEMARIQMQELIKNCKEFGVELYDLNHPYQGIVHVMGPEQGVTLPGMTIVCGDSHTATHGAFGALAFGIGTSEVEHVLATQTLKQGRAKTMKIEVQGKAAPGITAKDIVLAIIGKTGSAGGTGHVVEFCGEAIRDLSMEGRMTLCNMAIEMGAKAGLVAPDETTFNYVKGRLHAPKGKDFDDAVAYWKTLQTDEGATFDTVVTLQAEEISPQVTWGTNPGQVISVNDNIPDPASFADPVERASAEKALAYMGLKPGIPLTEVAIDKVFIGSCTNSRIEDLRAAAEIAKGRKVAPGVQALVVPGSGQVKAQAEAEGLDKIFIEAGFEWRLPGCSMCLAMNNDRLNPGERCASTSNRNFEGRQGRGGRTHLVSPAMAAAAAVTGHFADIRNIK</sequence>